<sequence>MFLIYLFVQTAESSWLSKTAKKLENSAKKRISEGIAIAIQGGPRRRRFVAEQDAIHSRVSREVPTLSDSV</sequence>
<dbReference type="EMBL" id="AB186032">
    <property type="protein sequence ID" value="BAD89085.1"/>
    <property type="molecule type" value="mRNA"/>
</dbReference>
<dbReference type="EMBL" id="AB186036">
    <property type="protein sequence ID" value="BAD89089.1"/>
    <property type="molecule type" value="Genomic_DNA"/>
</dbReference>
<dbReference type="PIR" id="A36221">
    <property type="entry name" value="A36221"/>
</dbReference>
<dbReference type="PDB" id="2N92">
    <property type="method" value="NMR"/>
    <property type="chains" value="A=14-44"/>
</dbReference>
<dbReference type="PDB" id="7DEH">
    <property type="method" value="NMR"/>
    <property type="chains" value="A=14-44"/>
</dbReference>
<dbReference type="PDB" id="7VOZ">
    <property type="method" value="NMR"/>
    <property type="chains" value="A=14-42"/>
</dbReference>
<dbReference type="PDBsum" id="2N92"/>
<dbReference type="PDBsum" id="7DEH"/>
<dbReference type="PDBsum" id="7VOZ"/>
<dbReference type="SMR" id="P14661"/>
<dbReference type="GO" id="GO:0005576">
    <property type="term" value="C:extracellular region"/>
    <property type="evidence" value="ECO:0000314"/>
    <property type="project" value="UniProtKB"/>
</dbReference>
<dbReference type="GO" id="GO:0019731">
    <property type="term" value="P:antibacterial humoral response"/>
    <property type="evidence" value="ECO:0007669"/>
    <property type="project" value="InterPro"/>
</dbReference>
<dbReference type="GO" id="GO:0002776">
    <property type="term" value="P:antimicrobial peptide secretion"/>
    <property type="evidence" value="ECO:0000314"/>
    <property type="project" value="UniProtKB"/>
</dbReference>
<dbReference type="GO" id="GO:0042742">
    <property type="term" value="P:defense response to bacterium"/>
    <property type="evidence" value="ECO:0000314"/>
    <property type="project" value="UniProtKB"/>
</dbReference>
<dbReference type="InterPro" id="IPR000875">
    <property type="entry name" value="Cecropin"/>
</dbReference>
<dbReference type="Pfam" id="PF00272">
    <property type="entry name" value="Cecropin"/>
    <property type="match status" value="1"/>
</dbReference>
<dbReference type="PROSITE" id="PS00268">
    <property type="entry name" value="CECROPIN"/>
    <property type="match status" value="1"/>
</dbReference>
<comment type="function">
    <text evidence="2 3">Has antibacterial activity against several Gram-positive and Gram-negative bacteria. Is weakly active against yeasts. Acts by a nonpore mechanism.</text>
</comment>
<comment type="subcellular location">
    <subcellularLocation>
        <location evidence="3">Secreted</location>
    </subcellularLocation>
</comment>
<comment type="tissue specificity">
    <text evidence="2">Expressed in the body wall, intestine, uterus and ovary.</text>
</comment>
<comment type="induction">
    <text evidence="2">By bacterial infection.</text>
</comment>
<comment type="mass spectrometry"/>
<comment type="similarity">
    <text evidence="4">Belongs to the cecropin family.</text>
</comment>
<comment type="caution">
    <text evidence="5">Was originally thought to originate from pig (PubMed:1396696, PubMed:2512577). It was later shown that this protein in fact originates from A.suum which is present in pig intestine (PubMed:12737319).</text>
</comment>
<feature type="signal peptide" evidence="1 3">
    <location>
        <begin position="1"/>
        <end position="13"/>
    </location>
</feature>
<feature type="chain" id="PRO_0000044676" description="Cecropin-P1">
    <location>
        <begin position="14"/>
        <end position="44"/>
    </location>
</feature>
<feature type="propeptide" id="PRO_0000397964" description="Removed in mature form">
    <location>
        <begin position="45"/>
        <end position="70"/>
    </location>
</feature>
<feature type="strand" evidence="6">
    <location>
        <begin position="21"/>
        <end position="23"/>
    </location>
</feature>
<feature type="helix" evidence="6">
    <location>
        <begin position="27"/>
        <end position="40"/>
    </location>
</feature>
<keyword id="KW-0002">3D-structure</keyword>
<keyword id="KW-0044">Antibiotic</keyword>
<keyword id="KW-0929">Antimicrobial</keyword>
<keyword id="KW-0903">Direct protein sequencing</keyword>
<keyword id="KW-0964">Secreted</keyword>
<keyword id="KW-0732">Signal</keyword>
<reference key="1">
    <citation type="journal article" date="2005" name="Biochem. J.">
        <title>Cecropin P1 and novel nematode cecropins: a bacteria-inducible antimicrobial peptide family in the nematode Ascaris suum.</title>
        <authorList>
            <person name="Pillai A."/>
            <person name="Ueno S."/>
            <person name="Zhang H."/>
            <person name="Lee J.M."/>
            <person name="Kato Y."/>
        </authorList>
    </citation>
    <scope>NUCLEOTIDE SEQUENCE [GENOMIC DNA / MRNA]</scope>
    <scope>FUNCTION</scope>
    <scope>TISSUE SPECIFICITY</scope>
    <scope>INDUCTION</scope>
</reference>
<reference key="2">
    <citation type="journal article" date="1989" name="Proc. Natl. Acad. Sci. U.S.A.">
        <title>Antibacterial peptides from pig intestine: isolation of a mammalian cecropin.</title>
        <authorList>
            <person name="Lee J.-Y."/>
            <person name="Boman A."/>
            <person name="Chuanxin S."/>
            <person name="Andersson M."/>
            <person name="Joernvall H."/>
            <person name="Mutt V."/>
            <person name="Boman H.G."/>
        </authorList>
    </citation>
    <scope>PROTEIN SEQUENCE OF 14-44</scope>
    <scope>SUBCELLULAR LOCATION</scope>
    <scope>FUNCTION</scope>
</reference>
<reference key="3">
    <citation type="journal article" date="2003" name="Cell. Mol. Life Sci.">
        <title>Ascaris nematodes from pig and human make three antibacterial peptides: isolation of cecropin P1 and two ASABF peptides.</title>
        <authorList>
            <person name="Andersson M."/>
            <person name="Boman A."/>
            <person name="Boman H.G."/>
        </authorList>
    </citation>
    <scope>PROTEIN SEQUENCE OF 14-44</scope>
    <scope>MASS SPECTROMETRY</scope>
    <scope>REVISES SPECIES OF ORIGIN</scope>
</reference>
<reference key="4">
    <citation type="journal article" date="1992" name="Eur. J. Biochem.">
        <title>The structure of the mammalian antibacterial peptide cecropin P1 in solution, determined by proton-NMR.</title>
        <authorList>
            <person name="Sipos D."/>
            <person name="Andersson M."/>
            <person name="Ehrenberg A."/>
        </authorList>
    </citation>
    <scope>STRUCTURE BY NMR OF 14-44</scope>
</reference>
<organism>
    <name type="scientific">Ascaris suum</name>
    <name type="common">Pig roundworm</name>
    <name type="synonym">Ascaris lumbricoides</name>
    <dbReference type="NCBI Taxonomy" id="6253"/>
    <lineage>
        <taxon>Eukaryota</taxon>
        <taxon>Metazoa</taxon>
        <taxon>Ecdysozoa</taxon>
        <taxon>Nematoda</taxon>
        <taxon>Chromadorea</taxon>
        <taxon>Rhabditida</taxon>
        <taxon>Spirurina</taxon>
        <taxon>Ascaridomorpha</taxon>
        <taxon>Ascaridoidea</taxon>
        <taxon>Ascarididae</taxon>
        <taxon>Ascaris</taxon>
    </lineage>
</organism>
<evidence type="ECO:0000269" key="1">
    <source>
    </source>
</evidence>
<evidence type="ECO:0000269" key="2">
    <source>
    </source>
</evidence>
<evidence type="ECO:0000269" key="3">
    <source>
    </source>
</evidence>
<evidence type="ECO:0000305" key="4"/>
<evidence type="ECO:0000305" key="5">
    <source>
    </source>
</evidence>
<evidence type="ECO:0007829" key="6">
    <source>
        <dbReference type="PDB" id="2N92"/>
    </source>
</evidence>
<name>CECP1_ASCSU</name>
<protein>
    <recommendedName>
        <fullName>Cecropin-P1</fullName>
    </recommendedName>
</protein>
<accession>P14661</accession>
<accession>Q5H7N7</accession>
<proteinExistence type="evidence at protein level"/>
<gene>
    <name type="primary">ASCEC-1</name>
</gene>